<accession>C3LLS2</accession>
<protein>
    <recommendedName>
        <fullName evidence="1">Thiopurine S-methyltransferase</fullName>
        <ecNumber evidence="1">2.1.1.67</ecNumber>
    </recommendedName>
    <alternativeName>
        <fullName evidence="1">Thiopurine methyltransferase</fullName>
    </alternativeName>
</protein>
<gene>
    <name evidence="1" type="primary">tpm</name>
    <name type="ordered locus">VCM66_1181</name>
</gene>
<name>TPMT_VIBCM</name>
<feature type="chain" id="PRO_1000148591" description="Thiopurine S-methyltransferase">
    <location>
        <begin position="1"/>
        <end position="218"/>
    </location>
</feature>
<feature type="binding site" evidence="1">
    <location>
        <position position="11"/>
    </location>
    <ligand>
        <name>S-adenosyl-L-methionine</name>
        <dbReference type="ChEBI" id="CHEBI:59789"/>
    </ligand>
</feature>
<feature type="binding site" evidence="1">
    <location>
        <position position="46"/>
    </location>
    <ligand>
        <name>S-adenosyl-L-methionine</name>
        <dbReference type="ChEBI" id="CHEBI:59789"/>
    </ligand>
</feature>
<feature type="binding site" evidence="1">
    <location>
        <position position="67"/>
    </location>
    <ligand>
        <name>S-adenosyl-L-methionine</name>
        <dbReference type="ChEBI" id="CHEBI:59789"/>
    </ligand>
</feature>
<feature type="binding site" evidence="1">
    <location>
        <position position="122"/>
    </location>
    <ligand>
        <name>S-adenosyl-L-methionine</name>
        <dbReference type="ChEBI" id="CHEBI:59789"/>
    </ligand>
</feature>
<proteinExistence type="inferred from homology"/>
<keyword id="KW-0963">Cytoplasm</keyword>
<keyword id="KW-0489">Methyltransferase</keyword>
<keyword id="KW-0949">S-adenosyl-L-methionine</keyword>
<keyword id="KW-0808">Transferase</keyword>
<dbReference type="EC" id="2.1.1.67" evidence="1"/>
<dbReference type="EMBL" id="CP001233">
    <property type="protein sequence ID" value="ACP05498.1"/>
    <property type="molecule type" value="Genomic_DNA"/>
</dbReference>
<dbReference type="RefSeq" id="WP_001205535.1">
    <property type="nucleotide sequence ID" value="NC_012578.1"/>
</dbReference>
<dbReference type="SMR" id="C3LLS2"/>
<dbReference type="KEGG" id="vcm:VCM66_1181"/>
<dbReference type="HOGENOM" id="CLU_085515_1_0_6"/>
<dbReference type="Proteomes" id="UP000001217">
    <property type="component" value="Chromosome I"/>
</dbReference>
<dbReference type="GO" id="GO:0005737">
    <property type="term" value="C:cytoplasm"/>
    <property type="evidence" value="ECO:0007669"/>
    <property type="project" value="UniProtKB-SubCell"/>
</dbReference>
<dbReference type="GO" id="GO:0008119">
    <property type="term" value="F:thiopurine S-methyltransferase activity"/>
    <property type="evidence" value="ECO:0007669"/>
    <property type="project" value="UniProtKB-UniRule"/>
</dbReference>
<dbReference type="GO" id="GO:0032259">
    <property type="term" value="P:methylation"/>
    <property type="evidence" value="ECO:0007669"/>
    <property type="project" value="UniProtKB-KW"/>
</dbReference>
<dbReference type="GO" id="GO:0010038">
    <property type="term" value="P:response to metal ion"/>
    <property type="evidence" value="ECO:0007669"/>
    <property type="project" value="InterPro"/>
</dbReference>
<dbReference type="CDD" id="cd02440">
    <property type="entry name" value="AdoMet_MTases"/>
    <property type="match status" value="1"/>
</dbReference>
<dbReference type="FunFam" id="3.40.50.150:FF:000505">
    <property type="entry name" value="Thiopurine S-methyltransferase"/>
    <property type="match status" value="1"/>
</dbReference>
<dbReference type="Gene3D" id="3.40.50.150">
    <property type="entry name" value="Vaccinia Virus protein VP39"/>
    <property type="match status" value="1"/>
</dbReference>
<dbReference type="HAMAP" id="MF_00812">
    <property type="entry name" value="Thiopur_methtran"/>
    <property type="match status" value="1"/>
</dbReference>
<dbReference type="InterPro" id="IPR029063">
    <property type="entry name" value="SAM-dependent_MTases_sf"/>
</dbReference>
<dbReference type="InterPro" id="IPR022474">
    <property type="entry name" value="Thiopur_S-MeTfrase_Se/Te_detox"/>
</dbReference>
<dbReference type="InterPro" id="IPR025835">
    <property type="entry name" value="Thiopurine_S-MeTrfase"/>
</dbReference>
<dbReference type="InterPro" id="IPR008854">
    <property type="entry name" value="TPMT"/>
</dbReference>
<dbReference type="NCBIfam" id="NF009732">
    <property type="entry name" value="PRK13255.1"/>
    <property type="match status" value="1"/>
</dbReference>
<dbReference type="NCBIfam" id="TIGR03840">
    <property type="entry name" value="TMPT_Se_Te"/>
    <property type="match status" value="1"/>
</dbReference>
<dbReference type="PANTHER" id="PTHR10259">
    <property type="entry name" value="THIOPURINE S-METHYLTRANSFERASE"/>
    <property type="match status" value="1"/>
</dbReference>
<dbReference type="PANTHER" id="PTHR10259:SF11">
    <property type="entry name" value="THIOPURINE S-METHYLTRANSFERASE"/>
    <property type="match status" value="1"/>
</dbReference>
<dbReference type="Pfam" id="PF05724">
    <property type="entry name" value="TPMT"/>
    <property type="match status" value="1"/>
</dbReference>
<dbReference type="PIRSF" id="PIRSF023956">
    <property type="entry name" value="Thiopurine_S-methyltransferase"/>
    <property type="match status" value="1"/>
</dbReference>
<dbReference type="SUPFAM" id="SSF53335">
    <property type="entry name" value="S-adenosyl-L-methionine-dependent methyltransferases"/>
    <property type="match status" value="1"/>
</dbReference>
<dbReference type="PROSITE" id="PS51585">
    <property type="entry name" value="SAM_MT_TPMT"/>
    <property type="match status" value="1"/>
</dbReference>
<evidence type="ECO:0000255" key="1">
    <source>
        <dbReference type="HAMAP-Rule" id="MF_00812"/>
    </source>
</evidence>
<reference key="1">
    <citation type="journal article" date="2008" name="PLoS ONE">
        <title>A recalibrated molecular clock and independent origins for the cholera pandemic clones.</title>
        <authorList>
            <person name="Feng L."/>
            <person name="Reeves P.R."/>
            <person name="Lan R."/>
            <person name="Ren Y."/>
            <person name="Gao C."/>
            <person name="Zhou Z."/>
            <person name="Ren Y."/>
            <person name="Cheng J."/>
            <person name="Wang W."/>
            <person name="Wang J."/>
            <person name="Qian W."/>
            <person name="Li D."/>
            <person name="Wang L."/>
        </authorList>
    </citation>
    <scope>NUCLEOTIDE SEQUENCE [LARGE SCALE GENOMIC DNA]</scope>
    <source>
        <strain>M66-2</strain>
    </source>
</reference>
<sequence length="218" mass="25114">MRDPEFWHNKWAANQIGFHLEDVNPLLIRFWSDLAPKRSEKVLVPLCGKSEDLIWLANQHDSVQGVELSQIAVRSFFAEHFYTPTVTRLNAQHELYQFDELTLFTGDFFTAPVESVDLVYDRAALVALPEEMRAEYAQRVLQLLKPGGRILLVSMDYVQTELSGPPFSVPEAEIRTLFMGCEVRRVYQDTSIDPHLNKRTQAGLSRFAEEVWVIEKSE</sequence>
<comment type="catalytic activity">
    <reaction evidence="1">
        <text>S-adenosyl-L-methionine + a thiopurine = S-adenosyl-L-homocysteine + a thiopurine S-methylether.</text>
        <dbReference type="EC" id="2.1.1.67"/>
    </reaction>
</comment>
<comment type="subcellular location">
    <subcellularLocation>
        <location evidence="1">Cytoplasm</location>
    </subcellularLocation>
</comment>
<comment type="similarity">
    <text evidence="1">Belongs to the class I-like SAM-binding methyltransferase superfamily. TPMT family.</text>
</comment>
<organism>
    <name type="scientific">Vibrio cholerae serotype O1 (strain M66-2)</name>
    <dbReference type="NCBI Taxonomy" id="579112"/>
    <lineage>
        <taxon>Bacteria</taxon>
        <taxon>Pseudomonadati</taxon>
        <taxon>Pseudomonadota</taxon>
        <taxon>Gammaproteobacteria</taxon>
        <taxon>Vibrionales</taxon>
        <taxon>Vibrionaceae</taxon>
        <taxon>Vibrio</taxon>
    </lineage>
</organism>